<keyword id="KW-0058">Aromatic hydrocarbons catabolism</keyword>
<keyword id="KW-0520">NAD</keyword>
<keyword id="KW-0560">Oxidoreductase</keyword>
<keyword id="KW-1185">Reference proteome</keyword>
<evidence type="ECO:0000255" key="1">
    <source>
        <dbReference type="HAMAP-Rule" id="MF_01657"/>
    </source>
</evidence>
<dbReference type="EC" id="1.2.1.10" evidence="1"/>
<dbReference type="EMBL" id="AM406670">
    <property type="protein sequence ID" value="CAL94590.1"/>
    <property type="molecule type" value="Genomic_DNA"/>
</dbReference>
<dbReference type="EMBL" id="AM406670">
    <property type="protein sequence ID" value="CAL95049.1"/>
    <property type="molecule type" value="Genomic_DNA"/>
</dbReference>
<dbReference type="RefSeq" id="WP_011765706.1">
    <property type="nucleotide sequence ID" value="NC_008702.1"/>
</dbReference>
<dbReference type="SMR" id="A1K6Y5"/>
<dbReference type="STRING" id="62928.azo1973"/>
<dbReference type="KEGG" id="azo:azo1973"/>
<dbReference type="KEGG" id="azo:azo2432"/>
<dbReference type="eggNOG" id="COG4569">
    <property type="taxonomic scope" value="Bacteria"/>
</dbReference>
<dbReference type="HOGENOM" id="CLU_062208_0_0_4"/>
<dbReference type="Proteomes" id="UP000002588">
    <property type="component" value="Chromosome"/>
</dbReference>
<dbReference type="GO" id="GO:0008774">
    <property type="term" value="F:acetaldehyde dehydrogenase (acetylating) activity"/>
    <property type="evidence" value="ECO:0007669"/>
    <property type="project" value="UniProtKB-UniRule"/>
</dbReference>
<dbReference type="GO" id="GO:0051287">
    <property type="term" value="F:NAD binding"/>
    <property type="evidence" value="ECO:0007669"/>
    <property type="project" value="UniProtKB-UniRule"/>
</dbReference>
<dbReference type="GO" id="GO:0009056">
    <property type="term" value="P:catabolic process"/>
    <property type="evidence" value="ECO:0007669"/>
    <property type="project" value="UniProtKB-KW"/>
</dbReference>
<dbReference type="CDD" id="cd23933">
    <property type="entry name" value="ALDH_C"/>
    <property type="match status" value="1"/>
</dbReference>
<dbReference type="Gene3D" id="3.30.360.10">
    <property type="entry name" value="Dihydrodipicolinate Reductase, domain 2"/>
    <property type="match status" value="1"/>
</dbReference>
<dbReference type="Gene3D" id="3.40.50.720">
    <property type="entry name" value="NAD(P)-binding Rossmann-like Domain"/>
    <property type="match status" value="1"/>
</dbReference>
<dbReference type="HAMAP" id="MF_01657">
    <property type="entry name" value="Ac_ald_DH_ac"/>
    <property type="match status" value="1"/>
</dbReference>
<dbReference type="InterPro" id="IPR003361">
    <property type="entry name" value="Acetaldehyde_dehydrogenase"/>
</dbReference>
<dbReference type="InterPro" id="IPR015426">
    <property type="entry name" value="Acetylaldehyde_DH_C"/>
</dbReference>
<dbReference type="InterPro" id="IPR036291">
    <property type="entry name" value="NAD(P)-bd_dom_sf"/>
</dbReference>
<dbReference type="InterPro" id="IPR000534">
    <property type="entry name" value="Semialdehyde_DH_NAD-bd"/>
</dbReference>
<dbReference type="NCBIfam" id="TIGR03215">
    <property type="entry name" value="ac_ald_DH_ac"/>
    <property type="match status" value="1"/>
</dbReference>
<dbReference type="NCBIfam" id="NF006157">
    <property type="entry name" value="PRK08300.1"/>
    <property type="match status" value="1"/>
</dbReference>
<dbReference type="Pfam" id="PF09290">
    <property type="entry name" value="AcetDehyd-dimer"/>
    <property type="match status" value="1"/>
</dbReference>
<dbReference type="PIRSF" id="PIRSF015689">
    <property type="entry name" value="Actaldh_dh_actl"/>
    <property type="match status" value="1"/>
</dbReference>
<dbReference type="SMART" id="SM00859">
    <property type="entry name" value="Semialdhyde_dh"/>
    <property type="match status" value="1"/>
</dbReference>
<dbReference type="SUPFAM" id="SSF55347">
    <property type="entry name" value="Glyceraldehyde-3-phosphate dehydrogenase-like, C-terminal domain"/>
    <property type="match status" value="1"/>
</dbReference>
<dbReference type="SUPFAM" id="SSF51735">
    <property type="entry name" value="NAD(P)-binding Rossmann-fold domains"/>
    <property type="match status" value="1"/>
</dbReference>
<gene>
    <name type="primary">mhpF</name>
    <name type="ordered locus">azo1973</name>
</gene>
<gene>
    <name type="primary">nahO</name>
    <name type="ordered locus">azo2432</name>
</gene>
<accession>A1K6Y5</accession>
<feature type="chain" id="PRO_0000387618" description="Acetaldehyde dehydrogenase 2/3">
    <location>
        <begin position="1"/>
        <end position="306"/>
    </location>
</feature>
<feature type="active site" description="Acyl-thioester intermediate" evidence="1">
    <location>
        <position position="130"/>
    </location>
</feature>
<feature type="binding site" evidence="1">
    <location>
        <begin position="161"/>
        <end position="169"/>
    </location>
    <ligand>
        <name>NAD(+)</name>
        <dbReference type="ChEBI" id="CHEBI:57540"/>
    </ligand>
</feature>
<feature type="binding site" evidence="1">
    <location>
        <position position="272"/>
    </location>
    <ligand>
        <name>NAD(+)</name>
        <dbReference type="ChEBI" id="CHEBI:57540"/>
    </ligand>
</feature>
<name>ACDH2_AZOSB</name>
<reference key="1">
    <citation type="journal article" date="2006" name="Nat. Biotechnol.">
        <title>Complete genome of the mutualistic, N2-fixing grass endophyte Azoarcus sp. strain BH72.</title>
        <authorList>
            <person name="Krause A."/>
            <person name="Ramakumar A."/>
            <person name="Bartels D."/>
            <person name="Battistoni F."/>
            <person name="Bekel T."/>
            <person name="Boch J."/>
            <person name="Boehm M."/>
            <person name="Friedrich F."/>
            <person name="Hurek T."/>
            <person name="Krause L."/>
            <person name="Linke B."/>
            <person name="McHardy A.C."/>
            <person name="Sarkar A."/>
            <person name="Schneiker S."/>
            <person name="Syed A.A."/>
            <person name="Thauer R."/>
            <person name="Vorhoelter F.-J."/>
            <person name="Weidner S."/>
            <person name="Puehler A."/>
            <person name="Reinhold-Hurek B."/>
            <person name="Kaiser O."/>
            <person name="Goesmann A."/>
        </authorList>
    </citation>
    <scope>NUCLEOTIDE SEQUENCE [LARGE SCALE GENOMIC DNA]</scope>
    <source>
        <strain>BH72</strain>
    </source>
</reference>
<proteinExistence type="inferred from homology"/>
<comment type="catalytic activity">
    <reaction evidence="1">
        <text>acetaldehyde + NAD(+) + CoA = acetyl-CoA + NADH + H(+)</text>
        <dbReference type="Rhea" id="RHEA:23288"/>
        <dbReference type="ChEBI" id="CHEBI:15343"/>
        <dbReference type="ChEBI" id="CHEBI:15378"/>
        <dbReference type="ChEBI" id="CHEBI:57287"/>
        <dbReference type="ChEBI" id="CHEBI:57288"/>
        <dbReference type="ChEBI" id="CHEBI:57540"/>
        <dbReference type="ChEBI" id="CHEBI:57945"/>
        <dbReference type="EC" id="1.2.1.10"/>
    </reaction>
</comment>
<comment type="similarity">
    <text evidence="1">Belongs to the acetaldehyde dehydrogenase family.</text>
</comment>
<sequence>MNKIKCALIGPGNIGTDLLYKLKRSPVLEPVWMVGIDAASEGLARARELGLKTTADGVDGLLPHVKADGVQIAFDATSAYVHAENSRKLNELGVLMIDLTPAAIGPFCVPPVNLKDHVGRGEMNVNMVTCGGQATIPMVAAVSRVQPVKYGEIVATVSSKSAGPGTRKNIDEFTRTTAGAVEKVGGAKVGKAIIILNPAEPPLIMRDTVHCLTETEPDQQKITESIHAMIREVQKYVPGYKLVNGPVFDGNRVSIYLEVEGLGDYLPKYAGNLDIMTAAGARTAEMFAEEILAGRLTLESNRAVLA</sequence>
<protein>
    <recommendedName>
        <fullName evidence="1">Acetaldehyde dehydrogenase 2/3</fullName>
        <ecNumber evidence="1">1.2.1.10</ecNumber>
    </recommendedName>
    <alternativeName>
        <fullName evidence="1">Acetaldehyde dehydrogenase [acetylating] 2/3</fullName>
    </alternativeName>
</protein>
<organism>
    <name type="scientific">Azoarcus sp. (strain BH72)</name>
    <dbReference type="NCBI Taxonomy" id="418699"/>
    <lineage>
        <taxon>Bacteria</taxon>
        <taxon>Pseudomonadati</taxon>
        <taxon>Pseudomonadota</taxon>
        <taxon>Betaproteobacteria</taxon>
        <taxon>Rhodocyclales</taxon>
        <taxon>Zoogloeaceae</taxon>
        <taxon>Azoarcus</taxon>
    </lineage>
</organism>